<reference key="1">
    <citation type="submission" date="2003-01" db="EMBL/GenBank/DDBJ databases">
        <authorList>
            <consortium name="NIH - Zebrafish Gene Collection (ZGC) project"/>
        </authorList>
    </citation>
    <scope>NUCLEOTIDE SEQUENCE [LARGE SCALE MRNA]</scope>
    <source>
        <strain>AB</strain>
    </source>
</reference>
<dbReference type="EMBL" id="BC045449">
    <property type="protein sequence ID" value="AAH45449.1"/>
    <property type="molecule type" value="mRNA"/>
</dbReference>
<dbReference type="RefSeq" id="NP_958891.1">
    <property type="nucleotide sequence ID" value="NM_201483.1"/>
</dbReference>
<dbReference type="SMR" id="Q7ZVQ8"/>
<dbReference type="FunCoup" id="Q7ZVQ8">
    <property type="interactions" value="2"/>
</dbReference>
<dbReference type="STRING" id="7955.ENSDARP00000002476"/>
<dbReference type="PaxDb" id="7955-ENSDARP00000002476"/>
<dbReference type="GeneID" id="334334"/>
<dbReference type="KEGG" id="dre:334334"/>
<dbReference type="AGR" id="ZFIN:ZDB-GENE-030131-6266"/>
<dbReference type="CTD" id="334334"/>
<dbReference type="ZFIN" id="ZDB-GENE-030131-6266">
    <property type="gene designation" value="ivns1abpb"/>
</dbReference>
<dbReference type="eggNOG" id="KOG4441">
    <property type="taxonomic scope" value="Eukaryota"/>
</dbReference>
<dbReference type="InParanoid" id="Q7ZVQ8"/>
<dbReference type="OrthoDB" id="45365at2759"/>
<dbReference type="PhylomeDB" id="Q7ZVQ8"/>
<dbReference type="PRO" id="PR:Q7ZVQ8"/>
<dbReference type="Proteomes" id="UP000000437">
    <property type="component" value="Chromosome 2"/>
</dbReference>
<dbReference type="GO" id="GO:0031463">
    <property type="term" value="C:Cul3-RING ubiquitin ligase complex"/>
    <property type="evidence" value="ECO:0000318"/>
    <property type="project" value="GO_Central"/>
</dbReference>
<dbReference type="GO" id="GO:0005737">
    <property type="term" value="C:cytoplasm"/>
    <property type="evidence" value="ECO:0000318"/>
    <property type="project" value="GO_Central"/>
</dbReference>
<dbReference type="GO" id="GO:0005856">
    <property type="term" value="C:cytoskeleton"/>
    <property type="evidence" value="ECO:0007669"/>
    <property type="project" value="UniProtKB-SubCell"/>
</dbReference>
<dbReference type="GO" id="GO:0005634">
    <property type="term" value="C:nucleus"/>
    <property type="evidence" value="ECO:0007669"/>
    <property type="project" value="UniProtKB-SubCell"/>
</dbReference>
<dbReference type="GO" id="GO:1990756">
    <property type="term" value="F:ubiquitin-like ligase-substrate adaptor activity"/>
    <property type="evidence" value="ECO:0000318"/>
    <property type="project" value="GO_Central"/>
</dbReference>
<dbReference type="GO" id="GO:0043161">
    <property type="term" value="P:proteasome-mediated ubiquitin-dependent protein catabolic process"/>
    <property type="evidence" value="ECO:0000318"/>
    <property type="project" value="GO_Central"/>
</dbReference>
<dbReference type="CDD" id="cd18502">
    <property type="entry name" value="BACK_NS1BP_IVNS1ABP"/>
    <property type="match status" value="1"/>
</dbReference>
<dbReference type="CDD" id="cd18306">
    <property type="entry name" value="BTB_POZ_NS1BP"/>
    <property type="match status" value="1"/>
</dbReference>
<dbReference type="Gene3D" id="1.25.40.420">
    <property type="match status" value="1"/>
</dbReference>
<dbReference type="Gene3D" id="2.120.10.80">
    <property type="entry name" value="Kelch-type beta propeller"/>
    <property type="match status" value="2"/>
</dbReference>
<dbReference type="Gene3D" id="3.30.710.10">
    <property type="entry name" value="Potassium Channel Kv1.1, Chain A"/>
    <property type="match status" value="1"/>
</dbReference>
<dbReference type="InterPro" id="IPR011705">
    <property type="entry name" value="BACK"/>
</dbReference>
<dbReference type="InterPro" id="IPR017096">
    <property type="entry name" value="BTB-kelch_protein"/>
</dbReference>
<dbReference type="InterPro" id="IPR000210">
    <property type="entry name" value="BTB/POZ_dom"/>
</dbReference>
<dbReference type="InterPro" id="IPR015915">
    <property type="entry name" value="Kelch-typ_b-propeller"/>
</dbReference>
<dbReference type="InterPro" id="IPR006652">
    <property type="entry name" value="Kelch_1"/>
</dbReference>
<dbReference type="InterPro" id="IPR011333">
    <property type="entry name" value="SKP1/BTB/POZ_sf"/>
</dbReference>
<dbReference type="PANTHER" id="PTHR24412:SF396">
    <property type="entry name" value="INFLUENZA VIRUS NS1A-BINDING PROTEIN"/>
    <property type="match status" value="1"/>
</dbReference>
<dbReference type="PANTHER" id="PTHR24412">
    <property type="entry name" value="KELCH PROTEIN"/>
    <property type="match status" value="1"/>
</dbReference>
<dbReference type="Pfam" id="PF07707">
    <property type="entry name" value="BACK"/>
    <property type="match status" value="1"/>
</dbReference>
<dbReference type="Pfam" id="PF00651">
    <property type="entry name" value="BTB"/>
    <property type="match status" value="1"/>
</dbReference>
<dbReference type="Pfam" id="PF01344">
    <property type="entry name" value="Kelch_1"/>
    <property type="match status" value="2"/>
</dbReference>
<dbReference type="Pfam" id="PF24681">
    <property type="entry name" value="Kelch_KLHDC2_KLHL20_DRC7"/>
    <property type="match status" value="1"/>
</dbReference>
<dbReference type="PIRSF" id="PIRSF037037">
    <property type="entry name" value="Kelch-like_protein_gigaxonin"/>
    <property type="match status" value="1"/>
</dbReference>
<dbReference type="PRINTS" id="PR00501">
    <property type="entry name" value="KELCHREPEAT"/>
</dbReference>
<dbReference type="SMART" id="SM00875">
    <property type="entry name" value="BACK"/>
    <property type="match status" value="1"/>
</dbReference>
<dbReference type="SMART" id="SM00225">
    <property type="entry name" value="BTB"/>
    <property type="match status" value="1"/>
</dbReference>
<dbReference type="SMART" id="SM00612">
    <property type="entry name" value="Kelch"/>
    <property type="match status" value="6"/>
</dbReference>
<dbReference type="SUPFAM" id="SSF117281">
    <property type="entry name" value="Kelch motif"/>
    <property type="match status" value="1"/>
</dbReference>
<dbReference type="SUPFAM" id="SSF54695">
    <property type="entry name" value="POZ domain"/>
    <property type="match status" value="1"/>
</dbReference>
<dbReference type="PROSITE" id="PS50097">
    <property type="entry name" value="BTB"/>
    <property type="match status" value="1"/>
</dbReference>
<feature type="chain" id="PRO_0000285080" description="Influenza virus NS1A-binding protein homolog B">
    <location>
        <begin position="1"/>
        <end position="640"/>
    </location>
</feature>
<feature type="domain" description="BTB" evidence="2">
    <location>
        <begin position="32"/>
        <end position="100"/>
    </location>
</feature>
<feature type="domain" description="BACK">
    <location>
        <begin position="135"/>
        <end position="186"/>
    </location>
</feature>
<feature type="repeat" description="Kelch 1">
    <location>
        <begin position="366"/>
        <end position="412"/>
    </location>
</feature>
<feature type="repeat" description="Kelch 2">
    <location>
        <begin position="413"/>
        <end position="460"/>
    </location>
</feature>
<feature type="repeat" description="Kelch 3">
    <location>
        <begin position="462"/>
        <end position="509"/>
    </location>
</feature>
<feature type="repeat" description="Kelch 4">
    <location>
        <begin position="510"/>
        <end position="556"/>
    </location>
</feature>
<feature type="repeat" description="Kelch 5">
    <location>
        <begin position="557"/>
        <end position="603"/>
    </location>
</feature>
<feature type="repeat" description="Kelch 6">
    <location>
        <begin position="605"/>
        <end position="640"/>
    </location>
</feature>
<feature type="region of interest" description="Disordered" evidence="3">
    <location>
        <begin position="257"/>
        <end position="278"/>
    </location>
</feature>
<feature type="compositionally biased region" description="Low complexity" evidence="3">
    <location>
        <begin position="267"/>
        <end position="278"/>
    </location>
</feature>
<keyword id="KW-0963">Cytoplasm</keyword>
<keyword id="KW-0206">Cytoskeleton</keyword>
<keyword id="KW-0880">Kelch repeat</keyword>
<keyword id="KW-0539">Nucleus</keyword>
<keyword id="KW-1185">Reference proteome</keyword>
<keyword id="KW-0677">Repeat</keyword>
<gene>
    <name type="primary">ivns1abpb</name>
</gene>
<protein>
    <recommendedName>
        <fullName>Influenza virus NS1A-binding protein homolog B</fullName>
        <shortName>NS1-BP homolog B</shortName>
        <shortName>NS1-binding protein homolog B</shortName>
    </recommendedName>
</protein>
<proteinExistence type="evidence at transcript level"/>
<accession>Q7ZVQ8</accession>
<comment type="function">
    <text evidence="1">Plays a role in cell division and in the dynamic organization of the actin skeleton as a stabilizer of actin filaments by association with F-actin through Kelch repeats.</text>
</comment>
<comment type="subcellular location">
    <subcellularLocation>
        <location>Cytoplasm</location>
    </subcellularLocation>
    <subcellularLocation>
        <location>Cytoplasm</location>
        <location>Cytoskeleton</location>
    </subcellularLocation>
    <subcellularLocation>
        <location>Nucleus</location>
    </subcellularLocation>
    <text evidence="1">Associated with actin filaments.</text>
</comment>
<evidence type="ECO:0000250" key="1"/>
<evidence type="ECO:0000255" key="2">
    <source>
        <dbReference type="PROSITE-ProRule" id="PRU00037"/>
    </source>
</evidence>
<evidence type="ECO:0000256" key="3">
    <source>
        <dbReference type="SAM" id="MobiDB-lite"/>
    </source>
</evidence>
<name>NS1BB_DANRE</name>
<organism>
    <name type="scientific">Danio rerio</name>
    <name type="common">Zebrafish</name>
    <name type="synonym">Brachydanio rerio</name>
    <dbReference type="NCBI Taxonomy" id="7955"/>
    <lineage>
        <taxon>Eukaryota</taxon>
        <taxon>Metazoa</taxon>
        <taxon>Chordata</taxon>
        <taxon>Craniata</taxon>
        <taxon>Vertebrata</taxon>
        <taxon>Euteleostomi</taxon>
        <taxon>Actinopterygii</taxon>
        <taxon>Neopterygii</taxon>
        <taxon>Teleostei</taxon>
        <taxon>Ostariophysi</taxon>
        <taxon>Cypriniformes</taxon>
        <taxon>Danionidae</taxon>
        <taxon>Danioninae</taxon>
        <taxon>Danio</taxon>
    </lineage>
</organism>
<sequence>MTPNGYLIFEDESFLDSTVAKMNALRKSGQFCDVRLLVCGHELMAHKAVLACCSPYLFEIFNADTEPQGGVSLVKFDDLNPDAMEVLLNYAYTAQLKADKSLVSDVYSAAKKLKLERVKQICGEYLLSKMDSQSAISYRNFASSMADGRLLGKIDGYIQDHLHEISEQDDFLKLPRLKLEVMLEDNLNLPGNGKLYSKVISWVQRSLWKNGDPLEKLMEEVQTLYYSADHKLHDGSLLEGQAEVCSTEDDHIQFVQKKPPRERDEMGSGASGSISPSNSQFNKHEWKYIASEKTTSNSYLCLAVLRGLLCVISLHGRTSPHNSPSATPCVLKSPNFEAQLEDLQEKLLKPMHYARSGLGTAELDCKLIAAGGYNREECLRTVECYDPKKDCWTFIAPMRTPRARFQMAVLMGEVYVMGGSNGHSDELSCGEMYNPRADEWIQVPELRTNRCNAGVCSLQNKLFVVGGSDPCGQKGLKNCDSFDPVTKMWTSCAPLNIKRHQAAVCELSGYMYVIGGAESWNCLNSVERYNPENNTWTLVASMNVARRGAGVAVYEGKLFVVGGFDGSHALRCVEVYDPATNEWRMLGSMTSARSNAGLAVLNNVLCAVGGFDGNEFLNSMEVYNLEKNEWSPFIEALGKN</sequence>